<feature type="chain" id="PRO_0000229656" description="NAD kinase">
    <location>
        <begin position="1"/>
        <end position="274"/>
    </location>
</feature>
<feature type="active site" description="Proton acceptor" evidence="1">
    <location>
        <position position="60"/>
    </location>
</feature>
<feature type="binding site" evidence="1">
    <location>
        <begin position="60"/>
        <end position="61"/>
    </location>
    <ligand>
        <name>NAD(+)</name>
        <dbReference type="ChEBI" id="CHEBI:57540"/>
    </ligand>
</feature>
<feature type="binding site" evidence="1">
    <location>
        <position position="65"/>
    </location>
    <ligand>
        <name>NAD(+)</name>
        <dbReference type="ChEBI" id="CHEBI:57540"/>
    </ligand>
</feature>
<feature type="binding site" evidence="1">
    <location>
        <begin position="127"/>
        <end position="128"/>
    </location>
    <ligand>
        <name>NAD(+)</name>
        <dbReference type="ChEBI" id="CHEBI:57540"/>
    </ligand>
</feature>
<feature type="binding site" evidence="1">
    <location>
        <position position="152"/>
    </location>
    <ligand>
        <name>NAD(+)</name>
        <dbReference type="ChEBI" id="CHEBI:57540"/>
    </ligand>
</feature>
<keyword id="KW-0067">ATP-binding</keyword>
<keyword id="KW-0963">Cytoplasm</keyword>
<keyword id="KW-0418">Kinase</keyword>
<keyword id="KW-0520">NAD</keyword>
<keyword id="KW-0521">NADP</keyword>
<keyword id="KW-0547">Nucleotide-binding</keyword>
<keyword id="KW-1185">Reference proteome</keyword>
<keyword id="KW-0808">Transferase</keyword>
<proteinExistence type="inferred from homology"/>
<protein>
    <recommendedName>
        <fullName evidence="1">NAD kinase</fullName>
        <ecNumber evidence="1">2.7.1.23</ecNumber>
    </recommendedName>
    <alternativeName>
        <fullName evidence="1">ATP-dependent NAD kinase</fullName>
    </alternativeName>
</protein>
<organism>
    <name type="scientific">Mycoplasmoides gallisepticum (strain R(low / passage 15 / clone 2))</name>
    <name type="common">Mycoplasma gallisepticum</name>
    <dbReference type="NCBI Taxonomy" id="710127"/>
    <lineage>
        <taxon>Bacteria</taxon>
        <taxon>Bacillati</taxon>
        <taxon>Mycoplasmatota</taxon>
        <taxon>Mycoplasmoidales</taxon>
        <taxon>Mycoplasmoidaceae</taxon>
        <taxon>Mycoplasmoides</taxon>
    </lineage>
</organism>
<evidence type="ECO:0000255" key="1">
    <source>
        <dbReference type="HAMAP-Rule" id="MF_00361"/>
    </source>
</evidence>
<accession>Q7NAU0</accession>
<gene>
    <name evidence="1" type="primary">nadK</name>
    <name type="ordered locus">MYCGA5450</name>
    <name type="ORF">MGA_0291</name>
</gene>
<name>NADK_MYCGA</name>
<comment type="function">
    <text evidence="1">Involved in the regulation of the intracellular balance of NAD and NADP, and is a key enzyme in the biosynthesis of NADP. Catalyzes specifically the phosphorylation on 2'-hydroxyl of the adenosine moiety of NAD to yield NADP.</text>
</comment>
<comment type="catalytic activity">
    <reaction evidence="1">
        <text>NAD(+) + ATP = ADP + NADP(+) + H(+)</text>
        <dbReference type="Rhea" id="RHEA:18629"/>
        <dbReference type="ChEBI" id="CHEBI:15378"/>
        <dbReference type="ChEBI" id="CHEBI:30616"/>
        <dbReference type="ChEBI" id="CHEBI:57540"/>
        <dbReference type="ChEBI" id="CHEBI:58349"/>
        <dbReference type="ChEBI" id="CHEBI:456216"/>
        <dbReference type="EC" id="2.7.1.23"/>
    </reaction>
</comment>
<comment type="cofactor">
    <cofactor evidence="1">
        <name>a divalent metal cation</name>
        <dbReference type="ChEBI" id="CHEBI:60240"/>
    </cofactor>
</comment>
<comment type="subcellular location">
    <subcellularLocation>
        <location evidence="1">Cytoplasm</location>
    </subcellularLocation>
</comment>
<comment type="similarity">
    <text evidence="1">Belongs to the NAD kinase family.</text>
</comment>
<reference key="1">
    <citation type="journal article" date="2003" name="Microbiology">
        <title>The complete genome sequence of the avian pathogen Mycoplasma gallisepticum strain R(low).</title>
        <authorList>
            <person name="Papazisi L."/>
            <person name="Gorton T.S."/>
            <person name="Kutish G."/>
            <person name="Markham P.F."/>
            <person name="Browning G.F."/>
            <person name="Nguyen D.K."/>
            <person name="Swartzell S."/>
            <person name="Madan A."/>
            <person name="Mahairas G."/>
            <person name="Geary S.J."/>
        </authorList>
    </citation>
    <scope>NUCLEOTIDE SEQUENCE [LARGE SCALE GENOMIC DNA]</scope>
    <source>
        <strain>R(low / passage 15 / clone 2)</strain>
    </source>
</reference>
<sequence length="274" mass="30923">MIMKVHQVQEKKMNKTYYLISSLAPKSESLKPLIKKELNKKLVEVDDPTVADYLFINGGDGTFIKNAIKYDRAGLKIIGINGGSLGFYTTFNETNIDQIANNLDQLKYTQLDFIRLQIDDQIHHALNEFNINSTTAYGYDIFIDNEFYQKFRGTGLLISTTTGSTGINKSANGAILFPRIKAIQMVELYPLLHSSFTTIQSPIILPIDTKIRIEIKENYCDHDACPRIVADGAVIRQGLSSTTIEISATRSQADYVATTDLRSYIQRLQKTFIY</sequence>
<dbReference type="EC" id="2.7.1.23" evidence="1"/>
<dbReference type="EMBL" id="AE015450">
    <property type="protein sequence ID" value="AAP56895.1"/>
    <property type="molecule type" value="Genomic_DNA"/>
</dbReference>
<dbReference type="RefSeq" id="WP_011113802.1">
    <property type="nucleotide sequence ID" value="NC_004829.2"/>
</dbReference>
<dbReference type="SMR" id="Q7NAU0"/>
<dbReference type="KEGG" id="mga:MGA_0291"/>
<dbReference type="PATRIC" id="fig|233150.7.peg.617"/>
<dbReference type="HOGENOM" id="CLU_008831_0_3_14"/>
<dbReference type="OrthoDB" id="9774737at2"/>
<dbReference type="Proteomes" id="UP000001418">
    <property type="component" value="Chromosome"/>
</dbReference>
<dbReference type="GO" id="GO:0005737">
    <property type="term" value="C:cytoplasm"/>
    <property type="evidence" value="ECO:0007669"/>
    <property type="project" value="UniProtKB-SubCell"/>
</dbReference>
<dbReference type="GO" id="GO:0005524">
    <property type="term" value="F:ATP binding"/>
    <property type="evidence" value="ECO:0007669"/>
    <property type="project" value="UniProtKB-KW"/>
</dbReference>
<dbReference type="GO" id="GO:0046872">
    <property type="term" value="F:metal ion binding"/>
    <property type="evidence" value="ECO:0007669"/>
    <property type="project" value="UniProtKB-UniRule"/>
</dbReference>
<dbReference type="GO" id="GO:0051287">
    <property type="term" value="F:NAD binding"/>
    <property type="evidence" value="ECO:0007669"/>
    <property type="project" value="UniProtKB-ARBA"/>
</dbReference>
<dbReference type="GO" id="GO:0003951">
    <property type="term" value="F:NAD+ kinase activity"/>
    <property type="evidence" value="ECO:0007669"/>
    <property type="project" value="UniProtKB-UniRule"/>
</dbReference>
<dbReference type="GO" id="GO:0019674">
    <property type="term" value="P:NAD metabolic process"/>
    <property type="evidence" value="ECO:0007669"/>
    <property type="project" value="InterPro"/>
</dbReference>
<dbReference type="GO" id="GO:0006741">
    <property type="term" value="P:NADP biosynthetic process"/>
    <property type="evidence" value="ECO:0007669"/>
    <property type="project" value="UniProtKB-UniRule"/>
</dbReference>
<dbReference type="Gene3D" id="3.40.50.10330">
    <property type="entry name" value="Probable inorganic polyphosphate/atp-NAD kinase, domain 1"/>
    <property type="match status" value="1"/>
</dbReference>
<dbReference type="Gene3D" id="2.60.200.30">
    <property type="entry name" value="Probable inorganic polyphosphate/atp-NAD kinase, domain 2"/>
    <property type="match status" value="1"/>
</dbReference>
<dbReference type="HAMAP" id="MF_00361">
    <property type="entry name" value="NAD_kinase"/>
    <property type="match status" value="1"/>
</dbReference>
<dbReference type="InterPro" id="IPR017438">
    <property type="entry name" value="ATP-NAD_kinase_N"/>
</dbReference>
<dbReference type="InterPro" id="IPR017437">
    <property type="entry name" value="ATP-NAD_kinase_PpnK-typ_C"/>
</dbReference>
<dbReference type="InterPro" id="IPR016064">
    <property type="entry name" value="NAD/diacylglycerol_kinase_sf"/>
</dbReference>
<dbReference type="InterPro" id="IPR002504">
    <property type="entry name" value="NADK"/>
</dbReference>
<dbReference type="NCBIfam" id="NF001838">
    <property type="entry name" value="PRK00561.1"/>
    <property type="match status" value="1"/>
</dbReference>
<dbReference type="PANTHER" id="PTHR20275">
    <property type="entry name" value="NAD KINASE"/>
    <property type="match status" value="1"/>
</dbReference>
<dbReference type="PANTHER" id="PTHR20275:SF0">
    <property type="entry name" value="NAD KINASE"/>
    <property type="match status" value="1"/>
</dbReference>
<dbReference type="Pfam" id="PF01513">
    <property type="entry name" value="NAD_kinase"/>
    <property type="match status" value="1"/>
</dbReference>
<dbReference type="Pfam" id="PF20143">
    <property type="entry name" value="NAD_kinase_C"/>
    <property type="match status" value="1"/>
</dbReference>
<dbReference type="SUPFAM" id="SSF111331">
    <property type="entry name" value="NAD kinase/diacylglycerol kinase-like"/>
    <property type="match status" value="1"/>
</dbReference>